<keyword id="KW-0044">Antibiotic</keyword>
<keyword id="KW-0929">Antimicrobial</keyword>
<keyword id="KW-0211">Defensin</keyword>
<keyword id="KW-1015">Disulfide bond</keyword>
<keyword id="KW-1185">Reference proteome</keyword>
<keyword id="KW-0964">Secreted</keyword>
<keyword id="KW-0732">Signal</keyword>
<comment type="function">
    <text evidence="1">Has antibacterial activity.</text>
</comment>
<comment type="subcellular location">
    <subcellularLocation>
        <location evidence="1">Secreted</location>
    </subcellularLocation>
</comment>
<comment type="similarity">
    <text evidence="3">Belongs to the beta-defensin family.</text>
</comment>
<comment type="sequence caution" evidence="3">
    <conflict type="erroneous initiation">
        <sequence resource="EMBL-CDS" id="AAT51886"/>
    </conflict>
</comment>
<dbReference type="EMBL" id="AY621347">
    <property type="protein sequence ID" value="AAT51886.1"/>
    <property type="status" value="ALT_INIT"/>
    <property type="molecule type" value="mRNA"/>
</dbReference>
<dbReference type="RefSeq" id="NP_001032609.2">
    <property type="nucleotide sequence ID" value="NM_001037520.2"/>
</dbReference>
<dbReference type="SMR" id="Q32ZH6"/>
<dbReference type="FunCoup" id="Q32ZH6">
    <property type="interactions" value="2"/>
</dbReference>
<dbReference type="STRING" id="10116.ENSRNOP00000018375"/>
<dbReference type="PhosphoSitePlus" id="Q32ZH6"/>
<dbReference type="PaxDb" id="10116-ENSRNOP00000018375"/>
<dbReference type="GeneID" id="641645"/>
<dbReference type="KEGG" id="rno:641645"/>
<dbReference type="UCSC" id="RGD:1563061">
    <property type="organism name" value="rat"/>
</dbReference>
<dbReference type="AGR" id="RGD:1563061"/>
<dbReference type="CTD" id="246082"/>
<dbReference type="RGD" id="1563061">
    <property type="gene designation" value="Defb15"/>
</dbReference>
<dbReference type="eggNOG" id="ENOG502TF62">
    <property type="taxonomic scope" value="Eukaryota"/>
</dbReference>
<dbReference type="InParanoid" id="Q32ZH6"/>
<dbReference type="OrthoDB" id="9603676at2759"/>
<dbReference type="PhylomeDB" id="Q32ZH6"/>
<dbReference type="PRO" id="PR:Q32ZH6"/>
<dbReference type="Proteomes" id="UP000002494">
    <property type="component" value="Unplaced"/>
</dbReference>
<dbReference type="GO" id="GO:0016020">
    <property type="term" value="C:membrane"/>
    <property type="evidence" value="ECO:0000266"/>
    <property type="project" value="RGD"/>
</dbReference>
<dbReference type="GO" id="GO:1990742">
    <property type="term" value="C:microvesicle"/>
    <property type="evidence" value="ECO:0000266"/>
    <property type="project" value="RGD"/>
</dbReference>
<dbReference type="GO" id="GO:0005634">
    <property type="term" value="C:nucleus"/>
    <property type="evidence" value="ECO:0000266"/>
    <property type="project" value="RGD"/>
</dbReference>
<dbReference type="GO" id="GO:0031727">
    <property type="term" value="F:CCR2 chemokine receptor binding"/>
    <property type="evidence" value="ECO:0000266"/>
    <property type="project" value="RGD"/>
</dbReference>
<dbReference type="GO" id="GO:0008201">
    <property type="term" value="F:heparin binding"/>
    <property type="evidence" value="ECO:0000266"/>
    <property type="project" value="RGD"/>
</dbReference>
<dbReference type="GO" id="GO:0001530">
    <property type="term" value="F:lipopolysaccharide binding"/>
    <property type="evidence" value="ECO:0000266"/>
    <property type="project" value="RGD"/>
</dbReference>
<dbReference type="GO" id="GO:0042742">
    <property type="term" value="P:defense response to bacterium"/>
    <property type="evidence" value="ECO:0007669"/>
    <property type="project" value="UniProtKB-KW"/>
</dbReference>
<dbReference type="GO" id="GO:0045087">
    <property type="term" value="P:innate immune response"/>
    <property type="evidence" value="ECO:0000266"/>
    <property type="project" value="RGD"/>
</dbReference>
<dbReference type="Gene3D" id="3.10.360.10">
    <property type="entry name" value="Antimicrobial Peptide, Beta-defensin 2, Chain A"/>
    <property type="match status" value="1"/>
</dbReference>
<dbReference type="InterPro" id="IPR025933">
    <property type="entry name" value="Beta_defensin_dom"/>
</dbReference>
<dbReference type="Pfam" id="PF13841">
    <property type="entry name" value="Defensin_beta_2"/>
    <property type="match status" value="1"/>
</dbReference>
<reference key="1">
    <citation type="journal article" date="2005" name="Physiol. Genomics">
        <title>Cross-species analysis of the mammalian beta-defensin gene family: presence of syntenic gene clusters and preferential expression in the male reproductive tract.</title>
        <authorList>
            <person name="Patil A.A."/>
            <person name="Cai Y."/>
            <person name="Sang Y."/>
            <person name="Blecha F."/>
            <person name="Zhang G."/>
        </authorList>
    </citation>
    <scope>NUCLEOTIDE SEQUENCE [MRNA]</scope>
</reference>
<sequence length="79" mass="9040">MKTFLFLFAVFFFLDPAKNAFFDEKCSRINGRCTESCLKNEELIALCQKNLKCCVTVQPCGRDKGDELDEDSGYNRTRG</sequence>
<organism>
    <name type="scientific">Rattus norvegicus</name>
    <name type="common">Rat</name>
    <dbReference type="NCBI Taxonomy" id="10116"/>
    <lineage>
        <taxon>Eukaryota</taxon>
        <taxon>Metazoa</taxon>
        <taxon>Chordata</taxon>
        <taxon>Craniata</taxon>
        <taxon>Vertebrata</taxon>
        <taxon>Euteleostomi</taxon>
        <taxon>Mammalia</taxon>
        <taxon>Eutheria</taxon>
        <taxon>Euarchontoglires</taxon>
        <taxon>Glires</taxon>
        <taxon>Rodentia</taxon>
        <taxon>Myomorpha</taxon>
        <taxon>Muroidea</taxon>
        <taxon>Muridae</taxon>
        <taxon>Murinae</taxon>
        <taxon>Rattus</taxon>
    </lineage>
</organism>
<evidence type="ECO:0000250" key="1"/>
<evidence type="ECO:0000255" key="2"/>
<evidence type="ECO:0000305" key="3"/>
<proteinExistence type="inferred from homology"/>
<gene>
    <name type="primary">Defb15</name>
</gene>
<protein>
    <recommendedName>
        <fullName>Beta-defensin 15</fullName>
        <shortName>BD-15</shortName>
    </recommendedName>
    <alternativeName>
        <fullName>Defensin, beta 15</fullName>
    </alternativeName>
</protein>
<accession>Q32ZH6</accession>
<feature type="signal peptide" evidence="2">
    <location>
        <begin position="1"/>
        <end position="20"/>
    </location>
</feature>
<feature type="chain" id="PRO_0000352700" description="Beta-defensin 15">
    <location>
        <begin position="21"/>
        <end position="79"/>
    </location>
</feature>
<feature type="disulfide bond" evidence="1">
    <location>
        <begin position="26"/>
        <end position="53"/>
    </location>
</feature>
<feature type="disulfide bond" evidence="1">
    <location>
        <begin position="33"/>
        <end position="47"/>
    </location>
</feature>
<feature type="disulfide bond" evidence="1">
    <location>
        <begin position="37"/>
        <end position="54"/>
    </location>
</feature>
<name>DFB15_RAT</name>